<sequence length="1116" mass="127532">MESVHIHVHSEYTLLSSMCRIPALVEKAKAAQFSALALTDRHVMYGAVPFYKACKESGLKPIIGMETTVRFAEDRESDLLLYARSNKGYEHLLKLSTIIQCREEKEKYVTWEELLAYKDDLLYVIPYSGGFVRACLEDEALERGERFIQFLKDHLGGESVYLEIQGTDRSKVEPINQLAAKLAIPLVCSQHIQVLEREDLDAWKVIQAIREGVLVEELRIEQEEDVCFFTLTEMEQTFRAYPEALQNTKKLADRCHVELTLGKPRLPKFQTPNEQSAEDYLRKLCEQGAKERYGEEWTKEKAQRLGEELAVIERMGFSDYFLIVWDFMRFAREASIVTGPGRGSVAGSLVAYVLFITDVDPLHYDLLFERFLNPERISLPDIDLDFPDHRREEVIVYVKKKYGANRVAQILTFGTLAARASVRDVGKALAIPPNVIEKISKEISGRPGMTLVKAYNENERLRQLVHASDEAQKVMKLARKVEGLPRHTSTHAAGVVISEQPLTEVIALQHGQGEVPLTQGTMETVEDVGLIKMDFLGLRNLTLLEMVVKRVRETYGHSLNVKQLPLNDAKTFALLAKGETTGVFQLESGGMRKVLRELKPNTFADIVAVNALYRPGPMEFIPDYIQGKEGTKEITYLHPDLEPILSSTYGVIVYQEQIMQIAAKMAGFSLGEADLLRRAISKKKGEALRQQEEAFVTGAVRQGYEQETAKKIYELIVRFANYGFNKSHAVAYSMLAYQLAYLKAHYPSSFYAALASTIWNQPEKLERLLQEMKQQGIRVLPPSLSKSDIHFSEEEEGVRFPLLPLRYVSVRAIRELIKARREAPVRSLFDLCSRVDGRIVTSRVMESLIKAGALDELGERATLLANIEEAFQFAEQVKEFQENTGGLFQLSVEEPEYIKVEPLTDLEKLAYEKEAVGFYLSGHPLLAYTESLRQYDRLTYLEGTERRFVKLAGMIHRIRRIRTKRGEVMGFLTMSDETGEWEAVVFPAVWAMYEWGLKEGELYFVEGKMDRGRSEELQLLVDKVLPLKHMLKKEKEKLFLKITADVEKEVERLNDIRRLLQVHHGPTPVVMYYEKQRKTIQLPEKYHVSLSFTLLHELEQLVGKEHVVVSTYEDES</sequence>
<proteinExistence type="inferred from homology"/>
<feature type="chain" id="PRO_0000103309" description="DNA polymerase III subunit alpha">
    <location>
        <begin position="1"/>
        <end position="1116"/>
    </location>
</feature>
<comment type="function">
    <text evidence="1">DNA polymerase III is a complex, multichain enzyme responsible for most of the replicative synthesis in bacteria. This DNA polymerase also exhibits 3' to 5' exonuclease activity. The alpha chain is the DNA polymerase (By similarity).</text>
</comment>
<comment type="catalytic activity">
    <reaction>
        <text>DNA(n) + a 2'-deoxyribonucleoside 5'-triphosphate = DNA(n+1) + diphosphate</text>
        <dbReference type="Rhea" id="RHEA:22508"/>
        <dbReference type="Rhea" id="RHEA-COMP:17339"/>
        <dbReference type="Rhea" id="RHEA-COMP:17340"/>
        <dbReference type="ChEBI" id="CHEBI:33019"/>
        <dbReference type="ChEBI" id="CHEBI:61560"/>
        <dbReference type="ChEBI" id="CHEBI:173112"/>
        <dbReference type="EC" id="2.7.7.7"/>
    </reaction>
</comment>
<comment type="subunit">
    <text evidence="1">DNA polymerase III contains a core (composed of alpha, epsilon and theta chains) that associates with a tau subunit. This core dimerizes to form the PolIII' complex. PolIII' associates with the gamma complex (composed of gamma, delta, delta', psi and chi chains) and with the beta chain to form the complete DNA polymerase III complex (By similarity).</text>
</comment>
<comment type="subcellular location">
    <subcellularLocation>
        <location evidence="1">Cytoplasm</location>
    </subcellularLocation>
</comment>
<comment type="similarity">
    <text evidence="2">Belongs to the DNA polymerase type-C family. DnaE subfamily.</text>
</comment>
<evidence type="ECO:0000250" key="1"/>
<evidence type="ECO:0000305" key="2"/>
<gene>
    <name type="primary">dnaE</name>
    <name type="ordered locus">BH3169</name>
</gene>
<name>DPO3A_HALH5</name>
<reference key="1">
    <citation type="journal article" date="2000" name="Nucleic Acids Res.">
        <title>Complete genome sequence of the alkaliphilic bacterium Bacillus halodurans and genomic sequence comparison with Bacillus subtilis.</title>
        <authorList>
            <person name="Takami H."/>
            <person name="Nakasone K."/>
            <person name="Takaki Y."/>
            <person name="Maeno G."/>
            <person name="Sasaki R."/>
            <person name="Masui N."/>
            <person name="Fuji F."/>
            <person name="Hirama C."/>
            <person name="Nakamura Y."/>
            <person name="Ogasawara N."/>
            <person name="Kuhara S."/>
            <person name="Horikoshi K."/>
        </authorList>
    </citation>
    <scope>NUCLEOTIDE SEQUENCE [LARGE SCALE GENOMIC DNA]</scope>
    <source>
        <strain>ATCC BAA-125 / DSM 18197 / FERM 7344 / JCM 9153 / C-125</strain>
    </source>
</reference>
<dbReference type="EC" id="2.7.7.7"/>
<dbReference type="EMBL" id="BA000004">
    <property type="protein sequence ID" value="BAB06888.1"/>
    <property type="molecule type" value="Genomic_DNA"/>
</dbReference>
<dbReference type="PIR" id="A84046">
    <property type="entry name" value="A84046"/>
</dbReference>
<dbReference type="RefSeq" id="WP_010899312.1">
    <property type="nucleotide sequence ID" value="NC_002570.2"/>
</dbReference>
<dbReference type="SMR" id="Q9K838"/>
<dbReference type="STRING" id="272558.gene:10729081"/>
<dbReference type="KEGG" id="bha:BH3169"/>
<dbReference type="eggNOG" id="COG0587">
    <property type="taxonomic scope" value="Bacteria"/>
</dbReference>
<dbReference type="HOGENOM" id="CLU_001600_0_1_9"/>
<dbReference type="OrthoDB" id="9803237at2"/>
<dbReference type="Proteomes" id="UP000001258">
    <property type="component" value="Chromosome"/>
</dbReference>
<dbReference type="GO" id="GO:0005737">
    <property type="term" value="C:cytoplasm"/>
    <property type="evidence" value="ECO:0007669"/>
    <property type="project" value="UniProtKB-SubCell"/>
</dbReference>
<dbReference type="GO" id="GO:0008408">
    <property type="term" value="F:3'-5' exonuclease activity"/>
    <property type="evidence" value="ECO:0007669"/>
    <property type="project" value="InterPro"/>
</dbReference>
<dbReference type="GO" id="GO:0003887">
    <property type="term" value="F:DNA-directed DNA polymerase activity"/>
    <property type="evidence" value="ECO:0007669"/>
    <property type="project" value="UniProtKB-KW"/>
</dbReference>
<dbReference type="GO" id="GO:0003676">
    <property type="term" value="F:nucleic acid binding"/>
    <property type="evidence" value="ECO:0007669"/>
    <property type="project" value="InterPro"/>
</dbReference>
<dbReference type="GO" id="GO:0006260">
    <property type="term" value="P:DNA replication"/>
    <property type="evidence" value="ECO:0007669"/>
    <property type="project" value="UniProtKB-KW"/>
</dbReference>
<dbReference type="CDD" id="cd04485">
    <property type="entry name" value="DnaE_OBF"/>
    <property type="match status" value="1"/>
</dbReference>
<dbReference type="Gene3D" id="1.10.150.870">
    <property type="match status" value="1"/>
</dbReference>
<dbReference type="Gene3D" id="1.10.10.1600">
    <property type="entry name" value="Bacterial DNA polymerase III alpha subunit, thumb domain"/>
    <property type="match status" value="1"/>
</dbReference>
<dbReference type="Gene3D" id="3.20.20.140">
    <property type="entry name" value="Metal-dependent hydrolases"/>
    <property type="match status" value="1"/>
</dbReference>
<dbReference type="InterPro" id="IPR011708">
    <property type="entry name" value="DNA_pol3_alpha_NTPase_dom"/>
</dbReference>
<dbReference type="InterPro" id="IPR041931">
    <property type="entry name" value="DNA_pol3_alpha_thumb_dom"/>
</dbReference>
<dbReference type="InterPro" id="IPR040982">
    <property type="entry name" value="DNA_pol3_finger"/>
</dbReference>
<dbReference type="InterPro" id="IPR004805">
    <property type="entry name" value="DnaE2/DnaE/PolC"/>
</dbReference>
<dbReference type="InterPro" id="IPR029460">
    <property type="entry name" value="DNAPol_HHH"/>
</dbReference>
<dbReference type="InterPro" id="IPR004365">
    <property type="entry name" value="NA-bd_OB_tRNA"/>
</dbReference>
<dbReference type="InterPro" id="IPR004013">
    <property type="entry name" value="PHP_dom"/>
</dbReference>
<dbReference type="InterPro" id="IPR003141">
    <property type="entry name" value="Pol/His_phosphatase_N"/>
</dbReference>
<dbReference type="InterPro" id="IPR016195">
    <property type="entry name" value="Pol/histidinol_Pase-like"/>
</dbReference>
<dbReference type="NCBIfam" id="TIGR00594">
    <property type="entry name" value="polc"/>
    <property type="match status" value="1"/>
</dbReference>
<dbReference type="NCBIfam" id="NF004226">
    <property type="entry name" value="PRK05673.1"/>
    <property type="match status" value="1"/>
</dbReference>
<dbReference type="PANTHER" id="PTHR32294">
    <property type="entry name" value="DNA POLYMERASE III SUBUNIT ALPHA"/>
    <property type="match status" value="1"/>
</dbReference>
<dbReference type="PANTHER" id="PTHR32294:SF0">
    <property type="entry name" value="DNA POLYMERASE III SUBUNIT ALPHA"/>
    <property type="match status" value="1"/>
</dbReference>
<dbReference type="Pfam" id="PF07733">
    <property type="entry name" value="DNA_pol3_alpha"/>
    <property type="match status" value="1"/>
</dbReference>
<dbReference type="Pfam" id="PF17657">
    <property type="entry name" value="DNA_pol3_finger"/>
    <property type="match status" value="1"/>
</dbReference>
<dbReference type="Pfam" id="PF14579">
    <property type="entry name" value="HHH_6"/>
    <property type="match status" value="1"/>
</dbReference>
<dbReference type="Pfam" id="PF02811">
    <property type="entry name" value="PHP"/>
    <property type="match status" value="1"/>
</dbReference>
<dbReference type="Pfam" id="PF01336">
    <property type="entry name" value="tRNA_anti-codon"/>
    <property type="match status" value="1"/>
</dbReference>
<dbReference type="SMART" id="SM00481">
    <property type="entry name" value="POLIIIAc"/>
    <property type="match status" value="1"/>
</dbReference>
<dbReference type="SUPFAM" id="SSF89550">
    <property type="entry name" value="PHP domain-like"/>
    <property type="match status" value="1"/>
</dbReference>
<accession>Q9K838</accession>
<protein>
    <recommendedName>
        <fullName>DNA polymerase III subunit alpha</fullName>
        <ecNumber>2.7.7.7</ecNumber>
    </recommendedName>
</protein>
<keyword id="KW-0963">Cytoplasm</keyword>
<keyword id="KW-0235">DNA replication</keyword>
<keyword id="KW-0239">DNA-directed DNA polymerase</keyword>
<keyword id="KW-0548">Nucleotidyltransferase</keyword>
<keyword id="KW-1185">Reference proteome</keyword>
<keyword id="KW-0808">Transferase</keyword>
<organism>
    <name type="scientific">Halalkalibacterium halodurans (strain ATCC BAA-125 / DSM 18197 / FERM 7344 / JCM 9153 / C-125)</name>
    <name type="common">Bacillus halodurans</name>
    <dbReference type="NCBI Taxonomy" id="272558"/>
    <lineage>
        <taxon>Bacteria</taxon>
        <taxon>Bacillati</taxon>
        <taxon>Bacillota</taxon>
        <taxon>Bacilli</taxon>
        <taxon>Bacillales</taxon>
        <taxon>Bacillaceae</taxon>
        <taxon>Halalkalibacterium (ex Joshi et al. 2022)</taxon>
    </lineage>
</organism>